<evidence type="ECO:0000250" key="1"/>
<evidence type="ECO:0000269" key="2">
    <source>
    </source>
</evidence>
<evidence type="ECO:0000269" key="3">
    <source>
    </source>
</evidence>
<evidence type="ECO:0000269" key="4">
    <source>
    </source>
</evidence>
<evidence type="ECO:0000303" key="5">
    <source>
    </source>
</evidence>
<evidence type="ECO:0000305" key="6"/>
<evidence type="ECO:0007829" key="7">
    <source>
        <dbReference type="PDB" id="1E4E"/>
    </source>
</evidence>
<proteinExistence type="evidence at protein level"/>
<organism>
    <name type="scientific">Enterococcus faecium</name>
    <name type="common">Streptococcus faecium</name>
    <dbReference type="NCBI Taxonomy" id="1352"/>
    <lineage>
        <taxon>Bacteria</taxon>
        <taxon>Bacillati</taxon>
        <taxon>Bacillota</taxon>
        <taxon>Bacilli</taxon>
        <taxon>Lactobacillales</taxon>
        <taxon>Enterococcaceae</taxon>
        <taxon>Enterococcus</taxon>
    </lineage>
</organism>
<dbReference type="EC" id="6.1.2.1"/>
<dbReference type="EMBL" id="X56895">
    <property type="protein sequence ID" value="CAA40215.1"/>
    <property type="molecule type" value="Genomic_DNA"/>
</dbReference>
<dbReference type="EMBL" id="M97297">
    <property type="protein sequence ID" value="AAA65956.1"/>
    <property type="molecule type" value="Genomic_DNA"/>
</dbReference>
<dbReference type="PIR" id="S12254">
    <property type="entry name" value="CESOVM"/>
</dbReference>
<dbReference type="RefSeq" id="WP_001079845.1">
    <property type="nucleotide sequence ID" value="NZ_WQKY01000109.1"/>
</dbReference>
<dbReference type="RefSeq" id="YP_001019035.1">
    <property type="nucleotide sequence ID" value="NC_008821.1"/>
</dbReference>
<dbReference type="RefSeq" id="YP_001974796.1">
    <property type="nucleotide sequence ID" value="NC_010980.1"/>
</dbReference>
<dbReference type="RefSeq" id="YP_002128399.1">
    <property type="nucleotide sequence ID" value="NC_011140.1"/>
</dbReference>
<dbReference type="RefSeq" id="YP_976077.1">
    <property type="nucleotide sequence ID" value="NC_008768.1"/>
</dbReference>
<dbReference type="PDB" id="1E4E">
    <property type="method" value="X-ray"/>
    <property type="resolution" value="2.50 A"/>
    <property type="chains" value="A/B=1-343"/>
</dbReference>
<dbReference type="PDBsum" id="1E4E"/>
<dbReference type="SMR" id="P25051"/>
<dbReference type="BindingDB" id="P25051"/>
<dbReference type="ChEMBL" id="CHEMBL6037"/>
<dbReference type="CARD" id="ARO:3000010">
    <property type="molecule name" value="vanA"/>
    <property type="mechanism identifier" value="ARO:0001001"/>
    <property type="mechanism name" value="antibiotic target alteration"/>
</dbReference>
<dbReference type="KEGG" id="ag:CAA40215"/>
<dbReference type="BioCyc" id="MetaCyc:MONOMER-15466"/>
<dbReference type="BRENDA" id="6.1.2.1">
    <property type="organism ID" value="2096"/>
</dbReference>
<dbReference type="SABIO-RK" id="P25051"/>
<dbReference type="EvolutionaryTrace" id="P25051"/>
<dbReference type="PRO" id="PR:P25051"/>
<dbReference type="GO" id="GO:0005829">
    <property type="term" value="C:cytosol"/>
    <property type="evidence" value="ECO:0007669"/>
    <property type="project" value="TreeGrafter"/>
</dbReference>
<dbReference type="GO" id="GO:0005886">
    <property type="term" value="C:plasma membrane"/>
    <property type="evidence" value="ECO:0007669"/>
    <property type="project" value="UniProtKB-SubCell"/>
</dbReference>
<dbReference type="GO" id="GO:0005524">
    <property type="term" value="F:ATP binding"/>
    <property type="evidence" value="ECO:0007669"/>
    <property type="project" value="UniProtKB-KW"/>
</dbReference>
<dbReference type="GO" id="GO:0160220">
    <property type="term" value="F:D-alanine-(R)-lactate ligase activity"/>
    <property type="evidence" value="ECO:0007669"/>
    <property type="project" value="UniProtKB-EC"/>
</dbReference>
<dbReference type="GO" id="GO:0008716">
    <property type="term" value="F:D-alanine-D-alanine ligase activity"/>
    <property type="evidence" value="ECO:0000314"/>
    <property type="project" value="CACAO"/>
</dbReference>
<dbReference type="GO" id="GO:0046872">
    <property type="term" value="F:metal ion binding"/>
    <property type="evidence" value="ECO:0007669"/>
    <property type="project" value="UniProtKB-KW"/>
</dbReference>
<dbReference type="GO" id="GO:0071555">
    <property type="term" value="P:cell wall organization"/>
    <property type="evidence" value="ECO:0007669"/>
    <property type="project" value="UniProtKB-KW"/>
</dbReference>
<dbReference type="GO" id="GO:0009252">
    <property type="term" value="P:peptidoglycan biosynthetic process"/>
    <property type="evidence" value="ECO:0007669"/>
    <property type="project" value="UniProtKB-UniRule"/>
</dbReference>
<dbReference type="GO" id="GO:0008360">
    <property type="term" value="P:regulation of cell shape"/>
    <property type="evidence" value="ECO:0007669"/>
    <property type="project" value="UniProtKB-KW"/>
</dbReference>
<dbReference type="GO" id="GO:0046677">
    <property type="term" value="P:response to antibiotic"/>
    <property type="evidence" value="ECO:0007669"/>
    <property type="project" value="UniProtKB-KW"/>
</dbReference>
<dbReference type="FunFam" id="3.30.1490.20:FF:000032">
    <property type="entry name" value="D-alanine--D-alanine ligase"/>
    <property type="match status" value="1"/>
</dbReference>
<dbReference type="FunFam" id="3.30.470.20:FF:000008">
    <property type="entry name" value="D-alanine--D-alanine ligase"/>
    <property type="match status" value="1"/>
</dbReference>
<dbReference type="FunFam" id="3.40.50.20:FF:000039">
    <property type="entry name" value="D-alanine--D-alanine ligase"/>
    <property type="match status" value="1"/>
</dbReference>
<dbReference type="Gene3D" id="3.40.50.20">
    <property type="match status" value="1"/>
</dbReference>
<dbReference type="Gene3D" id="3.30.1490.20">
    <property type="entry name" value="ATP-grasp fold, A domain"/>
    <property type="match status" value="1"/>
</dbReference>
<dbReference type="Gene3D" id="3.30.470.20">
    <property type="entry name" value="ATP-grasp fold, B domain"/>
    <property type="match status" value="1"/>
</dbReference>
<dbReference type="HAMAP" id="MF_00047">
    <property type="entry name" value="Dala_Dala_lig"/>
    <property type="match status" value="1"/>
</dbReference>
<dbReference type="InterPro" id="IPR011761">
    <property type="entry name" value="ATP-grasp"/>
</dbReference>
<dbReference type="InterPro" id="IPR013815">
    <property type="entry name" value="ATP_grasp_subdomain_1"/>
</dbReference>
<dbReference type="InterPro" id="IPR000291">
    <property type="entry name" value="D-Ala_lig_Van_CS"/>
</dbReference>
<dbReference type="InterPro" id="IPR005905">
    <property type="entry name" value="D_ala_D_ala"/>
</dbReference>
<dbReference type="InterPro" id="IPR011095">
    <property type="entry name" value="Dala_Dala_lig_C"/>
</dbReference>
<dbReference type="InterPro" id="IPR011127">
    <property type="entry name" value="Dala_Dala_lig_N"/>
</dbReference>
<dbReference type="InterPro" id="IPR016185">
    <property type="entry name" value="PreATP-grasp_dom_sf"/>
</dbReference>
<dbReference type="NCBIfam" id="TIGR01205">
    <property type="entry name" value="D_ala_D_alaTIGR"/>
    <property type="match status" value="1"/>
</dbReference>
<dbReference type="NCBIfam" id="NF000206">
    <property type="entry name" value="D_ala_D_lac"/>
    <property type="match status" value="1"/>
</dbReference>
<dbReference type="NCBIfam" id="NF012217">
    <property type="entry name" value="D_ala_D_lac_VanA"/>
    <property type="match status" value="1"/>
</dbReference>
<dbReference type="NCBIfam" id="NF002528">
    <property type="entry name" value="PRK01966.1-4"/>
    <property type="match status" value="1"/>
</dbReference>
<dbReference type="PANTHER" id="PTHR23132">
    <property type="entry name" value="D-ALANINE--D-ALANINE LIGASE"/>
    <property type="match status" value="1"/>
</dbReference>
<dbReference type="PANTHER" id="PTHR23132:SF25">
    <property type="entry name" value="D-ALANINE--D-ALANINE LIGASE A"/>
    <property type="match status" value="1"/>
</dbReference>
<dbReference type="Pfam" id="PF07478">
    <property type="entry name" value="Dala_Dala_lig_C"/>
    <property type="match status" value="1"/>
</dbReference>
<dbReference type="Pfam" id="PF01820">
    <property type="entry name" value="Dala_Dala_lig_N"/>
    <property type="match status" value="1"/>
</dbReference>
<dbReference type="PIRSF" id="PIRSF039102">
    <property type="entry name" value="Ddl/VanB"/>
    <property type="match status" value="1"/>
</dbReference>
<dbReference type="SUPFAM" id="SSF56059">
    <property type="entry name" value="Glutathione synthetase ATP-binding domain-like"/>
    <property type="match status" value="1"/>
</dbReference>
<dbReference type="SUPFAM" id="SSF52440">
    <property type="entry name" value="PreATP-grasp domain"/>
    <property type="match status" value="1"/>
</dbReference>
<dbReference type="PROSITE" id="PS50975">
    <property type="entry name" value="ATP_GRASP"/>
    <property type="match status" value="1"/>
</dbReference>
<dbReference type="PROSITE" id="PS00843">
    <property type="entry name" value="DALA_DALA_LIGASE_1"/>
    <property type="match status" value="1"/>
</dbReference>
<dbReference type="PROSITE" id="PS00844">
    <property type="entry name" value="DALA_DALA_LIGASE_2"/>
    <property type="match status" value="1"/>
</dbReference>
<accession>P25051</accession>
<reference key="1">
    <citation type="journal article" date="1990" name="Mol. Gen. Genet.">
        <title>The VANA glycopeptide resistance protein is related to D-alanyl-D-alanine ligase cell wall biosynthesis enzymes.</title>
        <authorList>
            <person name="Dutka-Malen S."/>
            <person name="Molinas C."/>
            <person name="Arthur M."/>
            <person name="Courvalin P."/>
        </authorList>
    </citation>
    <scope>NUCLEOTIDE SEQUENCE [GENOMIC DNA]</scope>
    <scope>PROTEIN SEQUENCE OF 1-9</scope>
    <scope>SUBCELLULAR LOCATION</scope>
    <source>
        <strain>BM4147</strain>
    </source>
</reference>
<reference key="2">
    <citation type="journal article" date="1993" name="J. Bacteriol.">
        <title>Characterization of Tn1546, a Tn3-related transposon conferring glycopeptide resistance by synthesis of depsipeptide peptidoglycan precursors in Enterococcus faecium BM4147.</title>
        <authorList>
            <person name="Arthur M."/>
            <person name="Molinas C."/>
            <person name="Depardieu F."/>
            <person name="Courvalin P."/>
        </authorList>
    </citation>
    <scope>NUCLEOTIDE SEQUENCE [GENOMIC DNA]</scope>
    <source>
        <strain>BM4147</strain>
    </source>
</reference>
<reference key="3">
    <citation type="journal article" date="1991" name="Biochemistry">
        <title>Molecular basis for vancomycin resistance in Enterococcus faecium BM4147: biosynthesis of a depsipeptide peptidoglycan precursor by vancomycin resistance proteins VanH and VanA.</title>
        <authorList>
            <person name="Bugg T.D.H."/>
            <person name="Wright G.D."/>
            <person name="Dutka-Malen S."/>
            <person name="Arthur M."/>
            <person name="Courvalin P."/>
            <person name="Walsh C.T."/>
        </authorList>
    </citation>
    <scope>FUNCTION</scope>
    <scope>CATALYTIC ACTIVITY</scope>
    <scope>SUBSTRATE SPECIFICITY</scope>
    <scope>BIOPHYSICOCHEMICAL PROPERTIES</scope>
    <source>
        <strain>BM4147</strain>
    </source>
</reference>
<reference key="4">
    <citation type="journal article" date="1992" name="J. Bacteriol.">
        <title>The cytoplasmic peptidoglycan precursor of vancomycin-resistant Enterococcus faecalis terminates in lactate.</title>
        <authorList>
            <person name="Handwerger S."/>
            <person name="Pucci M.J."/>
            <person name="Volk K.J."/>
            <person name="Liu J."/>
            <person name="Lee M.S."/>
        </authorList>
    </citation>
    <scope>CHARACTERIZATION OF REACTION PRODUCT</scope>
</reference>
<reference key="5">
    <citation type="journal article" date="2000" name="Proc. Natl. Acad. Sci. U.S.A.">
        <title>The molecular basis of vancomycin resistance in clinically relevant Enterococci: crystal structure of D-alanyl-D-lactate ligase (VanA).</title>
        <authorList>
            <person name="Roper D.I."/>
            <person name="Huyton T."/>
            <person name="Vagin A."/>
            <person name="Dodson G."/>
        </authorList>
    </citation>
    <scope>X-RAY CRYSTALLOGRAPHY (2.5 ANGSTROMS) IN COMPLEX WITH MAGNESIUM; ADP AND INHIBITOR</scope>
</reference>
<protein>
    <recommendedName>
        <fullName>Vancomycin/teicoplanin A-type resistance protein VanA</fullName>
        <ecNumber>6.1.2.1</ecNumber>
    </recommendedName>
    <alternativeName>
        <fullName>D-alanine--D-lactate ligase</fullName>
    </alternativeName>
    <alternativeName>
        <fullName>VanA ligase</fullName>
    </alternativeName>
</protein>
<geneLocation type="plasmid">
    <name>pIP816</name>
</geneLocation>
<comment type="function">
    <text evidence="3">Required for high-level resistance to glycopeptide antibiotics. D-Ala--D-Ala ligase of altered specificity which catalyzes ester bond formation between D-Ala and various D-hydroxy acids; produces a peptidoglycan which does not terminate in D-alanine but in D-lactate, thus preventing vancomycin or teicoplanin binding.</text>
</comment>
<comment type="catalytic activity">
    <reaction evidence="3">
        <text>(R)-lactate + D-alanine + ATP = D-alanyl-(R)-lactate + ADP + phosphate</text>
        <dbReference type="Rhea" id="RHEA:37347"/>
        <dbReference type="ChEBI" id="CHEBI:16004"/>
        <dbReference type="ChEBI" id="CHEBI:30616"/>
        <dbReference type="ChEBI" id="CHEBI:43474"/>
        <dbReference type="ChEBI" id="CHEBI:57416"/>
        <dbReference type="ChEBI" id="CHEBI:61166"/>
        <dbReference type="ChEBI" id="CHEBI:456216"/>
        <dbReference type="EC" id="6.1.2.1"/>
    </reaction>
</comment>
<comment type="cofactor">
    <cofactor evidence="1">
        <name>Mg(2+)</name>
        <dbReference type="ChEBI" id="CHEBI:18420"/>
    </cofactor>
    <cofactor evidence="1">
        <name>Mn(2+)</name>
        <dbReference type="ChEBI" id="CHEBI:29035"/>
    </cofactor>
    <text evidence="1">Binds 2 magnesium or manganese ions per subunit.</text>
</comment>
<comment type="biophysicochemical properties">
    <kinetics>
        <KM evidence="3">7.1 mM for D-lactate</KM>
        <KM evidence="3">3.8 mM for D-alanine</KM>
        <KM evidence="3">0.6 mM for 2-hydroxybutyrate</KM>
        <KM evidence="3">3.2 mM for 2-hydroxyvalerate</KM>
        <KM evidence="3">11 mM for 2-hydroxycaproate</KM>
    </kinetics>
</comment>
<comment type="subcellular location">
    <subcellularLocation>
        <location evidence="4">Cell membrane</location>
        <topology evidence="5">Peripheral membrane protein</topology>
        <orientation evidence="5">Cytoplasmic side</orientation>
    </subcellularLocation>
</comment>
<comment type="induction">
    <text>By vancomycin, mediated by VanS/VanR.</text>
</comment>
<comment type="similarity">
    <text evidence="6">Belongs to the D-alanine--D-alanine ligase family.</text>
</comment>
<feature type="chain" id="PRO_0000177917" description="Vancomycin/teicoplanin A-type resistance protein VanA">
    <location>
        <begin position="1"/>
        <end position="343"/>
    </location>
</feature>
<feature type="domain" description="ATP-grasp">
    <location>
        <begin position="137"/>
        <end position="338"/>
    </location>
</feature>
<feature type="binding site">
    <location>
        <position position="133"/>
    </location>
    <ligand>
        <name>ATP</name>
        <dbReference type="ChEBI" id="CHEBI:30616"/>
    </ligand>
</feature>
<feature type="binding site">
    <location>
        <begin position="169"/>
        <end position="171"/>
    </location>
    <ligand>
        <name>ATP</name>
        <dbReference type="ChEBI" id="CHEBI:30616"/>
    </ligand>
</feature>
<feature type="binding site">
    <location>
        <begin position="177"/>
        <end position="178"/>
    </location>
    <ligand>
        <name>ATP</name>
        <dbReference type="ChEBI" id="CHEBI:30616"/>
    </ligand>
</feature>
<feature type="binding site">
    <location>
        <begin position="207"/>
        <end position="214"/>
    </location>
    <ligand>
        <name>ATP</name>
        <dbReference type="ChEBI" id="CHEBI:30616"/>
    </ligand>
</feature>
<feature type="binding site">
    <location>
        <position position="241"/>
    </location>
    <ligand>
        <name>ATP</name>
        <dbReference type="ChEBI" id="CHEBI:30616"/>
    </ligand>
</feature>
<feature type="binding site">
    <location>
        <position position="244"/>
    </location>
    <ligand>
        <name>substrate</name>
    </ligand>
</feature>
<feature type="binding site">
    <location>
        <begin position="304"/>
        <end position="305"/>
    </location>
    <ligand>
        <name>ATP</name>
        <dbReference type="ChEBI" id="CHEBI:30616"/>
    </ligand>
</feature>
<feature type="binding site" evidence="2">
    <location>
        <position position="305"/>
    </location>
    <ligand>
        <name>Mg(2+)</name>
        <dbReference type="ChEBI" id="CHEBI:18420"/>
        <label>1</label>
    </ligand>
</feature>
<feature type="binding site" evidence="2">
    <location>
        <position position="305"/>
    </location>
    <ligand>
        <name>Mg(2+)</name>
        <dbReference type="ChEBI" id="CHEBI:18420"/>
        <label>2</label>
    </ligand>
</feature>
<feature type="binding site" evidence="2">
    <location>
        <position position="307"/>
    </location>
    <ligand>
        <name>Mg(2+)</name>
        <dbReference type="ChEBI" id="CHEBI:18420"/>
        <label>2</label>
    </ligand>
</feature>
<feature type="strand" evidence="7">
    <location>
        <begin position="4"/>
        <end position="11"/>
    </location>
</feature>
<feature type="helix" evidence="7">
    <location>
        <begin position="17"/>
        <end position="30"/>
    </location>
</feature>
<feature type="turn" evidence="7">
    <location>
        <begin position="33"/>
        <end position="35"/>
    </location>
</feature>
<feature type="strand" evidence="7">
    <location>
        <begin position="36"/>
        <end position="43"/>
    </location>
</feature>
<feature type="strand" evidence="7">
    <location>
        <begin position="49"/>
        <end position="53"/>
    </location>
</feature>
<feature type="strand" evidence="7">
    <location>
        <begin position="65"/>
        <end position="69"/>
    </location>
</feature>
<feature type="turn" evidence="7">
    <location>
        <begin position="73"/>
        <end position="75"/>
    </location>
</feature>
<feature type="strand" evidence="7">
    <location>
        <begin position="77"/>
        <end position="82"/>
    </location>
</feature>
<feature type="strand" evidence="7">
    <location>
        <begin position="85"/>
        <end position="90"/>
    </location>
</feature>
<feature type="strand" evidence="7">
    <location>
        <begin position="92"/>
        <end position="96"/>
    </location>
</feature>
<feature type="turn" evidence="7">
    <location>
        <begin position="101"/>
        <end position="103"/>
    </location>
</feature>
<feature type="strand" evidence="7">
    <location>
        <begin position="104"/>
        <end position="106"/>
    </location>
</feature>
<feature type="helix" evidence="7">
    <location>
        <begin position="107"/>
        <end position="115"/>
    </location>
</feature>
<feature type="strand" evidence="7">
    <location>
        <begin position="119"/>
        <end position="121"/>
    </location>
</feature>
<feature type="helix" evidence="7">
    <location>
        <begin position="124"/>
        <end position="131"/>
    </location>
</feature>
<feature type="helix" evidence="7">
    <location>
        <begin position="133"/>
        <end position="142"/>
    </location>
</feature>
<feature type="strand" evidence="7">
    <location>
        <begin position="150"/>
        <end position="153"/>
    </location>
</feature>
<feature type="helix" evidence="7">
    <location>
        <begin position="161"/>
        <end position="163"/>
    </location>
</feature>
<feature type="strand" evidence="7">
    <location>
        <begin position="168"/>
        <end position="174"/>
    </location>
</feature>
<feature type="turn" evidence="7">
    <location>
        <begin position="177"/>
        <end position="180"/>
    </location>
</feature>
<feature type="strand" evidence="7">
    <location>
        <begin position="182"/>
        <end position="184"/>
    </location>
</feature>
<feature type="helix" evidence="7">
    <location>
        <begin position="187"/>
        <end position="189"/>
    </location>
</feature>
<feature type="helix" evidence="7">
    <location>
        <begin position="190"/>
        <end position="197"/>
    </location>
</feature>
<feature type="turn" evidence="7">
    <location>
        <begin position="198"/>
        <end position="200"/>
    </location>
</feature>
<feature type="strand" evidence="7">
    <location>
        <begin position="202"/>
        <end position="208"/>
    </location>
</feature>
<feature type="strand" evidence="7">
    <location>
        <begin position="212"/>
        <end position="222"/>
    </location>
</feature>
<feature type="strand" evidence="7">
    <location>
        <begin position="232"/>
        <end position="239"/>
    </location>
</feature>
<feature type="helix" evidence="7">
    <location>
        <begin position="243"/>
        <end position="245"/>
    </location>
</feature>
<feature type="strand" evidence="7">
    <location>
        <begin position="246"/>
        <end position="248"/>
    </location>
</feature>
<feature type="helix" evidence="7">
    <location>
        <begin position="249"/>
        <end position="251"/>
    </location>
</feature>
<feature type="strand" evidence="7">
    <location>
        <begin position="254"/>
        <end position="258"/>
    </location>
</feature>
<feature type="helix" evidence="7">
    <location>
        <begin position="266"/>
        <end position="282"/>
    </location>
</feature>
<feature type="strand" evidence="7">
    <location>
        <begin position="286"/>
        <end position="295"/>
    </location>
</feature>
<feature type="strand" evidence="7">
    <location>
        <begin position="301"/>
        <end position="309"/>
    </location>
</feature>
<feature type="helix" evidence="7">
    <location>
        <begin position="317"/>
        <end position="324"/>
    </location>
</feature>
<feature type="helix" evidence="7">
    <location>
        <begin position="329"/>
        <end position="341"/>
    </location>
</feature>
<keyword id="KW-0002">3D-structure</keyword>
<keyword id="KW-0046">Antibiotic resistance</keyword>
<keyword id="KW-0067">ATP-binding</keyword>
<keyword id="KW-1003">Cell membrane</keyword>
<keyword id="KW-0133">Cell shape</keyword>
<keyword id="KW-0961">Cell wall biogenesis/degradation</keyword>
<keyword id="KW-0903">Direct protein sequencing</keyword>
<keyword id="KW-0436">Ligase</keyword>
<keyword id="KW-0460">Magnesium</keyword>
<keyword id="KW-0464">Manganese</keyword>
<keyword id="KW-0472">Membrane</keyword>
<keyword id="KW-0479">Metal-binding</keyword>
<keyword id="KW-0547">Nucleotide-binding</keyword>
<keyword id="KW-0573">Peptidoglycan synthesis</keyword>
<keyword id="KW-0614">Plasmid</keyword>
<name>VANA_ENTFC</name>
<sequence length="343" mass="37443">MNRIKVAILFGGCSEEHDVSVKSAIEIAANINKEKYEPLYIGITKSGVWKMCEKPCAEWENDNCYSAVLSPDKKMHGLLVKKNHEYEINHVDVAFSALHGKSGEDGSIQGLFELSGIPFVGCDIQSSAICMDKSLTYIVAKNAGIATPAFWVINKDDRPVAATFTYPVFVKPARSGSSFGVKKVNSADELDYAIESARQYDSKILIEQAVSGCEVGCAVLGNSAALVVGEVDQIRLQYGIFRIHQEVEPEKGSENAVITVPADLSAEERGRIQETAKKIYKALGCRGLARVDMFLQDNGRIVLNEVNTLPGFTSYSRYPRMMAAAGIALPELIDRLIVLALKG</sequence>
<gene>
    <name type="primary">vanA</name>
</gene>